<organism>
    <name type="scientific">Dictyostelium discoideum</name>
    <name type="common">Social amoeba</name>
    <dbReference type="NCBI Taxonomy" id="44689"/>
    <lineage>
        <taxon>Eukaryota</taxon>
        <taxon>Amoebozoa</taxon>
        <taxon>Evosea</taxon>
        <taxon>Eumycetozoa</taxon>
        <taxon>Dictyostelia</taxon>
        <taxon>Dictyosteliales</taxon>
        <taxon>Dictyosteliaceae</taxon>
        <taxon>Dictyostelium</taxon>
    </lineage>
</organism>
<gene>
    <name type="primary">srr</name>
    <name type="ORF">DDB_G0289463</name>
</gene>
<comment type="function">
    <text evidence="3">Catalyzes the synthesis of D-serine from L-serine (By similarity). Has dehydratase activity towards both L-serine and D-serine (By similarity).</text>
</comment>
<comment type="catalytic activity">
    <reaction evidence="3">
        <text>L-serine = D-serine</text>
        <dbReference type="Rhea" id="RHEA:10980"/>
        <dbReference type="ChEBI" id="CHEBI:33384"/>
        <dbReference type="ChEBI" id="CHEBI:35247"/>
        <dbReference type="EC" id="5.1.1.18"/>
    </reaction>
</comment>
<comment type="catalytic activity">
    <reaction evidence="3">
        <text>L-serine = pyruvate + NH4(+)</text>
        <dbReference type="Rhea" id="RHEA:19169"/>
        <dbReference type="ChEBI" id="CHEBI:15361"/>
        <dbReference type="ChEBI" id="CHEBI:28938"/>
        <dbReference type="ChEBI" id="CHEBI:33384"/>
        <dbReference type="EC" id="4.3.1.17"/>
    </reaction>
</comment>
<comment type="catalytic activity">
    <reaction evidence="3">
        <text>D-serine = pyruvate + NH4(+)</text>
        <dbReference type="Rhea" id="RHEA:13977"/>
        <dbReference type="ChEBI" id="CHEBI:15361"/>
        <dbReference type="ChEBI" id="CHEBI:28938"/>
        <dbReference type="ChEBI" id="CHEBI:35247"/>
        <dbReference type="EC" id="4.3.1.18"/>
    </reaction>
</comment>
<comment type="cofactor">
    <cofactor evidence="2">
        <name>Mg(2+)</name>
        <dbReference type="ChEBI" id="CHEBI:18420"/>
    </cofactor>
    <cofactor evidence="2">
        <name>Mn(2+)</name>
        <dbReference type="ChEBI" id="CHEBI:29035"/>
    </cofactor>
    <cofactor evidence="2">
        <name>Ca(2+)</name>
        <dbReference type="ChEBI" id="CHEBI:29108"/>
    </cofactor>
</comment>
<comment type="cofactor">
    <cofactor evidence="3">
        <name>pyridoxal 5'-phosphate</name>
        <dbReference type="ChEBI" id="CHEBI:597326"/>
    </cofactor>
</comment>
<comment type="subunit">
    <text evidence="3">Homodimer.</text>
</comment>
<comment type="similarity">
    <text evidence="4">Belongs to the serine/threonine dehydratase family.</text>
</comment>
<feature type="chain" id="PRO_0000328589" description="Serine racemase">
    <location>
        <begin position="1"/>
        <end position="324"/>
    </location>
</feature>
<feature type="active site" description="Proton acceptor" evidence="1">
    <location>
        <position position="56"/>
    </location>
</feature>
<feature type="active site" description="Proton acceptor" evidence="1">
    <location>
        <position position="81"/>
    </location>
</feature>
<feature type="binding site" evidence="2">
    <location>
        <position position="32"/>
    </location>
    <ligand>
        <name>ATP</name>
        <dbReference type="ChEBI" id="CHEBI:30616"/>
    </ligand>
</feature>
<feature type="binding site" evidence="2">
    <location>
        <position position="51"/>
    </location>
    <ligand>
        <name>ATP</name>
        <dbReference type="ChEBI" id="CHEBI:30616"/>
    </ligand>
</feature>
<feature type="binding site" evidence="2">
    <location>
        <position position="52"/>
    </location>
    <ligand>
        <name>ATP</name>
        <dbReference type="ChEBI" id="CHEBI:30616"/>
    </ligand>
</feature>
<feature type="binding site" evidence="2">
    <location>
        <position position="78"/>
    </location>
    <ligand>
        <name>Ca(2+)</name>
        <dbReference type="ChEBI" id="CHEBI:29108"/>
        <label>1</label>
    </ligand>
</feature>
<feature type="binding site" evidence="2">
    <location>
        <position position="83"/>
    </location>
    <ligand>
        <name>pyridoxal 5'-phosphate</name>
        <dbReference type="ChEBI" id="CHEBI:597326"/>
    </ligand>
</feature>
<feature type="binding site" evidence="2">
    <location>
        <position position="86"/>
    </location>
    <ligand>
        <name>ATP</name>
        <dbReference type="ChEBI" id="CHEBI:30616"/>
    </ligand>
</feature>
<feature type="binding site" evidence="2">
    <location>
        <position position="118"/>
    </location>
    <ligand>
        <name>ATP</name>
        <dbReference type="ChEBI" id="CHEBI:30616"/>
    </ligand>
</feature>
<feature type="binding site" evidence="2">
    <location>
        <position position="175"/>
    </location>
    <ligand>
        <name>Mg(2+)</name>
        <dbReference type="ChEBI" id="CHEBI:18420"/>
        <label>1</label>
    </ligand>
</feature>
<feature type="binding site" evidence="2">
    <location>
        <position position="182"/>
    </location>
    <ligand>
        <name>pyridoxal 5'-phosphate</name>
        <dbReference type="ChEBI" id="CHEBI:597326"/>
    </ligand>
</feature>
<feature type="binding site" evidence="2">
    <location>
        <position position="183"/>
    </location>
    <ligand>
        <name>pyridoxal 5'-phosphate</name>
        <dbReference type="ChEBI" id="CHEBI:597326"/>
    </ligand>
</feature>
<feature type="binding site" evidence="2">
    <location>
        <position position="184"/>
    </location>
    <ligand>
        <name>pyridoxal 5'-phosphate</name>
        <dbReference type="ChEBI" id="CHEBI:597326"/>
    </ligand>
</feature>
<feature type="binding site" evidence="2">
    <location>
        <position position="185"/>
    </location>
    <ligand>
        <name>pyridoxal 5'-phosphate</name>
        <dbReference type="ChEBI" id="CHEBI:597326"/>
    </ligand>
</feature>
<feature type="binding site" evidence="2">
    <location>
        <position position="207"/>
    </location>
    <ligand>
        <name>Ca(2+)</name>
        <dbReference type="ChEBI" id="CHEBI:29108"/>
        <label>2</label>
    </ligand>
</feature>
<feature type="binding site" evidence="2">
    <location>
        <position position="207"/>
    </location>
    <ligand>
        <name>Mg(2+)</name>
        <dbReference type="ChEBI" id="CHEBI:18420"/>
        <label>2</label>
    </ligand>
</feature>
<feature type="binding site" evidence="2">
    <location>
        <position position="207"/>
    </location>
    <ligand>
        <name>Mn(2+)</name>
        <dbReference type="ChEBI" id="CHEBI:29035"/>
    </ligand>
</feature>
<feature type="binding site" evidence="2">
    <location>
        <position position="211"/>
    </location>
    <ligand>
        <name>Ca(2+)</name>
        <dbReference type="ChEBI" id="CHEBI:29108"/>
        <label>2</label>
    </ligand>
</feature>
<feature type="binding site" evidence="2">
    <location>
        <position position="211"/>
    </location>
    <ligand>
        <name>Mg(2+)</name>
        <dbReference type="ChEBI" id="CHEBI:18420"/>
        <label>2</label>
    </ligand>
</feature>
<feature type="binding site" evidence="2">
    <location>
        <position position="211"/>
    </location>
    <ligand>
        <name>Mn(2+)</name>
        <dbReference type="ChEBI" id="CHEBI:29035"/>
    </ligand>
</feature>
<feature type="binding site" evidence="2">
    <location>
        <position position="213"/>
    </location>
    <ligand>
        <name>Ca(2+)</name>
        <dbReference type="ChEBI" id="CHEBI:29108"/>
        <label>2</label>
    </ligand>
</feature>
<feature type="binding site" evidence="2">
    <location>
        <position position="213"/>
    </location>
    <ligand>
        <name>Mg(2+)</name>
        <dbReference type="ChEBI" id="CHEBI:18420"/>
        <label>2</label>
    </ligand>
</feature>
<feature type="binding site" evidence="2">
    <location>
        <position position="213"/>
    </location>
    <ligand>
        <name>Mn(2+)</name>
        <dbReference type="ChEBI" id="CHEBI:29035"/>
    </ligand>
</feature>
<feature type="binding site" evidence="2">
    <location>
        <position position="277"/>
    </location>
    <ligand>
        <name>ATP</name>
        <dbReference type="ChEBI" id="CHEBI:30616"/>
    </ligand>
</feature>
<feature type="binding site" evidence="2">
    <location>
        <position position="310"/>
    </location>
    <ligand>
        <name>pyridoxal 5'-phosphate</name>
        <dbReference type="ChEBI" id="CHEBI:597326"/>
    </ligand>
</feature>
<feature type="binding site" evidence="2">
    <location>
        <position position="313"/>
    </location>
    <ligand>
        <name>ATP</name>
        <dbReference type="ChEBI" id="CHEBI:30616"/>
    </ligand>
</feature>
<feature type="modified residue" description="N6-(pyridoxal phosphate)lysine" evidence="2">
    <location>
        <position position="56"/>
    </location>
</feature>
<feature type="helix" evidence="5">
    <location>
        <begin position="9"/>
        <end position="19"/>
    </location>
</feature>
<feature type="helix" evidence="5">
    <location>
        <begin position="20"/>
        <end position="22"/>
    </location>
</feature>
<feature type="helix" evidence="5">
    <location>
        <begin position="32"/>
        <end position="38"/>
    </location>
</feature>
<feature type="strand" evidence="5">
    <location>
        <begin position="40"/>
        <end position="46"/>
    </location>
</feature>
<feature type="helix" evidence="5">
    <location>
        <begin position="47"/>
        <end position="49"/>
    </location>
</feature>
<feature type="helix" evidence="5">
    <location>
        <begin position="51"/>
        <end position="53"/>
    </location>
</feature>
<feature type="helix" evidence="5">
    <location>
        <begin position="58"/>
        <end position="66"/>
    </location>
</feature>
<feature type="turn" evidence="5">
    <location>
        <begin position="69"/>
        <end position="74"/>
    </location>
</feature>
<feature type="strand" evidence="5">
    <location>
        <begin position="76"/>
        <end position="78"/>
    </location>
</feature>
<feature type="helix" evidence="5">
    <location>
        <begin position="83"/>
        <end position="94"/>
    </location>
</feature>
<feature type="strand" evidence="5">
    <location>
        <begin position="99"/>
        <end position="104"/>
    </location>
</feature>
<feature type="helix" evidence="5">
    <location>
        <begin position="109"/>
        <end position="117"/>
    </location>
</feature>
<feature type="strand" evidence="5">
    <location>
        <begin position="121"/>
        <end position="125"/>
    </location>
</feature>
<feature type="helix" evidence="5">
    <location>
        <begin position="129"/>
        <end position="143"/>
    </location>
</feature>
<feature type="strand" evidence="5">
    <location>
        <begin position="150"/>
        <end position="152"/>
    </location>
</feature>
<feature type="helix" evidence="5">
    <location>
        <begin position="154"/>
        <end position="170"/>
    </location>
</feature>
<feature type="strand" evidence="5">
    <location>
        <begin position="171"/>
        <end position="173"/>
    </location>
</feature>
<feature type="strand" evidence="5">
    <location>
        <begin position="175"/>
        <end position="180"/>
    </location>
</feature>
<feature type="strand" evidence="5">
    <location>
        <begin position="182"/>
        <end position="184"/>
    </location>
</feature>
<feature type="helix" evidence="5">
    <location>
        <begin position="185"/>
        <end position="197"/>
    </location>
</feature>
<feature type="strand" evidence="5">
    <location>
        <begin position="201"/>
        <end position="208"/>
    </location>
</feature>
<feature type="helix" evidence="5">
    <location>
        <begin position="209"/>
        <end position="211"/>
    </location>
</feature>
<feature type="helix" evidence="5">
    <location>
        <begin position="213"/>
        <end position="220"/>
    </location>
</feature>
<feature type="helix" evidence="5">
    <location>
        <begin position="236"/>
        <end position="238"/>
    </location>
</feature>
<feature type="helix" evidence="5">
    <location>
        <begin position="246"/>
        <end position="253"/>
    </location>
</feature>
<feature type="strand" evidence="5">
    <location>
        <begin position="256"/>
        <end position="260"/>
    </location>
</feature>
<feature type="helix" evidence="5">
    <location>
        <begin position="262"/>
        <end position="276"/>
    </location>
</feature>
<feature type="helix" evidence="5">
    <location>
        <begin position="282"/>
        <end position="292"/>
    </location>
</feature>
<feature type="helix" evidence="5">
    <location>
        <begin position="294"/>
        <end position="297"/>
    </location>
</feature>
<feature type="strand" evidence="5">
    <location>
        <begin position="304"/>
        <end position="309"/>
    </location>
</feature>
<protein>
    <recommendedName>
        <fullName>Serine racemase</fullName>
        <ecNumber evidence="3">5.1.1.18</ecNumber>
    </recommendedName>
    <alternativeName>
        <fullName>D-serine ammonia-lyase</fullName>
    </alternativeName>
    <alternativeName>
        <fullName>D-serine dehydratase</fullName>
        <ecNumber evidence="3">4.3.1.18</ecNumber>
    </alternativeName>
    <alternativeName>
        <fullName>L-serine ammonia-lyase</fullName>
    </alternativeName>
    <alternativeName>
        <fullName>L-serine dehydratase</fullName>
        <ecNumber evidence="3">4.3.1.17</ecNumber>
    </alternativeName>
</protein>
<proteinExistence type="evidence at protein level"/>
<keyword id="KW-0002">3D-structure</keyword>
<keyword id="KW-0021">Allosteric enzyme</keyword>
<keyword id="KW-0067">ATP-binding</keyword>
<keyword id="KW-0106">Calcium</keyword>
<keyword id="KW-0413">Isomerase</keyword>
<keyword id="KW-0456">Lyase</keyword>
<keyword id="KW-0460">Magnesium</keyword>
<keyword id="KW-0464">Manganese</keyword>
<keyword id="KW-0479">Metal-binding</keyword>
<keyword id="KW-0547">Nucleotide-binding</keyword>
<keyword id="KW-0663">Pyridoxal phosphate</keyword>
<keyword id="KW-1185">Reference proteome</keyword>
<name>SRR_DICDI</name>
<evidence type="ECO:0000250" key="1">
    <source>
        <dbReference type="UniProtKB" id="O59791"/>
    </source>
</evidence>
<evidence type="ECO:0000250" key="2">
    <source>
        <dbReference type="UniProtKB" id="Q9GZT4"/>
    </source>
</evidence>
<evidence type="ECO:0000250" key="3">
    <source>
        <dbReference type="UniProtKB" id="Q9QZX7"/>
    </source>
</evidence>
<evidence type="ECO:0000305" key="4"/>
<evidence type="ECO:0007829" key="5">
    <source>
        <dbReference type="PDB" id="6LUT"/>
    </source>
</evidence>
<reference key="1">
    <citation type="journal article" date="2005" name="Nature">
        <title>The genome of the social amoeba Dictyostelium discoideum.</title>
        <authorList>
            <person name="Eichinger L."/>
            <person name="Pachebat J.A."/>
            <person name="Gloeckner G."/>
            <person name="Rajandream M.A."/>
            <person name="Sucgang R."/>
            <person name="Berriman M."/>
            <person name="Song J."/>
            <person name="Olsen R."/>
            <person name="Szafranski K."/>
            <person name="Xu Q."/>
            <person name="Tunggal B."/>
            <person name="Kummerfeld S."/>
            <person name="Madera M."/>
            <person name="Konfortov B.A."/>
            <person name="Rivero F."/>
            <person name="Bankier A.T."/>
            <person name="Lehmann R."/>
            <person name="Hamlin N."/>
            <person name="Davies R."/>
            <person name="Gaudet P."/>
            <person name="Fey P."/>
            <person name="Pilcher K."/>
            <person name="Chen G."/>
            <person name="Saunders D."/>
            <person name="Sodergren E.J."/>
            <person name="Davis P."/>
            <person name="Kerhornou A."/>
            <person name="Nie X."/>
            <person name="Hall N."/>
            <person name="Anjard C."/>
            <person name="Hemphill L."/>
            <person name="Bason N."/>
            <person name="Farbrother P."/>
            <person name="Desany B."/>
            <person name="Just E."/>
            <person name="Morio T."/>
            <person name="Rost R."/>
            <person name="Churcher C.M."/>
            <person name="Cooper J."/>
            <person name="Haydock S."/>
            <person name="van Driessche N."/>
            <person name="Cronin A."/>
            <person name="Goodhead I."/>
            <person name="Muzny D.M."/>
            <person name="Mourier T."/>
            <person name="Pain A."/>
            <person name="Lu M."/>
            <person name="Harper D."/>
            <person name="Lindsay R."/>
            <person name="Hauser H."/>
            <person name="James K.D."/>
            <person name="Quiles M."/>
            <person name="Madan Babu M."/>
            <person name="Saito T."/>
            <person name="Buchrieser C."/>
            <person name="Wardroper A."/>
            <person name="Felder M."/>
            <person name="Thangavelu M."/>
            <person name="Johnson D."/>
            <person name="Knights A."/>
            <person name="Loulseged H."/>
            <person name="Mungall K.L."/>
            <person name="Oliver K."/>
            <person name="Price C."/>
            <person name="Quail M.A."/>
            <person name="Urushihara H."/>
            <person name="Hernandez J."/>
            <person name="Rabbinowitsch E."/>
            <person name="Steffen D."/>
            <person name="Sanders M."/>
            <person name="Ma J."/>
            <person name="Kohara Y."/>
            <person name="Sharp S."/>
            <person name="Simmonds M.N."/>
            <person name="Spiegler S."/>
            <person name="Tivey A."/>
            <person name="Sugano S."/>
            <person name="White B."/>
            <person name="Walker D."/>
            <person name="Woodward J.R."/>
            <person name="Winckler T."/>
            <person name="Tanaka Y."/>
            <person name="Shaulsky G."/>
            <person name="Schleicher M."/>
            <person name="Weinstock G.M."/>
            <person name="Rosenthal A."/>
            <person name="Cox E.C."/>
            <person name="Chisholm R.L."/>
            <person name="Gibbs R.A."/>
            <person name="Loomis W.F."/>
            <person name="Platzer M."/>
            <person name="Kay R.R."/>
            <person name="Williams J.G."/>
            <person name="Dear P.H."/>
            <person name="Noegel A.A."/>
            <person name="Barrell B.G."/>
            <person name="Kuspa A."/>
        </authorList>
    </citation>
    <scope>NUCLEOTIDE SEQUENCE [LARGE SCALE GENOMIC DNA]</scope>
    <source>
        <strain>AX4</strain>
    </source>
</reference>
<sequence>MEPMATVTLKDIKEAHKRIEKYIHKTPVLTNSTINELAGKELYFKCENLQKTGSFKMRGACNAIFSLDEEELSKGVVTHSSGNHGQALSYASKVRCVKCYVVVPEDAPSVKLNAICGYGATVTKCKATLEARESNTKQLIEQHSCKLIHPFDNLQVIAGQGTASLELMEQVENLDAIITPVGGGGLLSGTCITAKSLNPNIKVFAAEPLGADDTYRSLLSGEIQKHTPGKPNTIADGLLTTVGSLTFPIIKENCDGVILVTEDEIKYAMKLVWERMKIIIEPSSATTLAAILKQEFKDKKDIKKVGIIISGGNVDLSSISKILN</sequence>
<dbReference type="EC" id="5.1.1.18" evidence="3"/>
<dbReference type="EC" id="4.3.1.18" evidence="3"/>
<dbReference type="EC" id="4.3.1.17" evidence="3"/>
<dbReference type="EMBL" id="AAFI02000141">
    <property type="protein sequence ID" value="EAL62711.1"/>
    <property type="molecule type" value="Genomic_DNA"/>
</dbReference>
<dbReference type="RefSeq" id="XP_636213.1">
    <property type="nucleotide sequence ID" value="XM_631121.1"/>
</dbReference>
<dbReference type="PDB" id="6LUT">
    <property type="method" value="X-ray"/>
    <property type="resolution" value="1.35 A"/>
    <property type="chains" value="A/B=1-324"/>
</dbReference>
<dbReference type="PDBsum" id="6LUT"/>
<dbReference type="SMR" id="Q54HH2"/>
<dbReference type="FunCoup" id="Q54HH2">
    <property type="interactions" value="173"/>
</dbReference>
<dbReference type="STRING" id="44689.Q54HH2"/>
<dbReference type="PaxDb" id="44689-DDB0230209"/>
<dbReference type="EnsemblProtists" id="EAL62711">
    <property type="protein sequence ID" value="EAL62711"/>
    <property type="gene ID" value="DDB_G0289463"/>
</dbReference>
<dbReference type="GeneID" id="8627151"/>
<dbReference type="KEGG" id="ddi:DDB_G0289463"/>
<dbReference type="dictyBase" id="DDB_G0289463">
    <property type="gene designation" value="srr"/>
</dbReference>
<dbReference type="VEuPathDB" id="AmoebaDB:DDB_G0289463"/>
<dbReference type="eggNOG" id="KOG1251">
    <property type="taxonomic scope" value="Eukaryota"/>
</dbReference>
<dbReference type="HOGENOM" id="CLU_021152_4_2_1"/>
<dbReference type="InParanoid" id="Q54HH2"/>
<dbReference type="OMA" id="LIHPFDH"/>
<dbReference type="PhylomeDB" id="Q54HH2"/>
<dbReference type="BRENDA" id="4.3.1.18">
    <property type="organism ID" value="1939"/>
</dbReference>
<dbReference type="Reactome" id="R-DDI-977347">
    <property type="pathway name" value="Serine biosynthesis"/>
</dbReference>
<dbReference type="PRO" id="PR:Q54HH2"/>
<dbReference type="Proteomes" id="UP000002195">
    <property type="component" value="Chromosome 5"/>
</dbReference>
<dbReference type="GO" id="GO:0005737">
    <property type="term" value="C:cytoplasm"/>
    <property type="evidence" value="ECO:0000250"/>
    <property type="project" value="dictyBase"/>
</dbReference>
<dbReference type="GO" id="GO:0005524">
    <property type="term" value="F:ATP binding"/>
    <property type="evidence" value="ECO:0000318"/>
    <property type="project" value="GO_Central"/>
</dbReference>
<dbReference type="GO" id="GO:0008721">
    <property type="term" value="F:D-serine ammonia-lyase activity"/>
    <property type="evidence" value="ECO:0000314"/>
    <property type="project" value="dictyBase"/>
</dbReference>
<dbReference type="GO" id="GO:0003941">
    <property type="term" value="F:L-serine ammonia-lyase activity"/>
    <property type="evidence" value="ECO:0000314"/>
    <property type="project" value="dictyBase"/>
</dbReference>
<dbReference type="GO" id="GO:0000287">
    <property type="term" value="F:magnesium ion binding"/>
    <property type="evidence" value="ECO:0000250"/>
    <property type="project" value="dictyBase"/>
</dbReference>
<dbReference type="GO" id="GO:0030170">
    <property type="term" value="F:pyridoxal phosphate binding"/>
    <property type="evidence" value="ECO:0000314"/>
    <property type="project" value="dictyBase"/>
</dbReference>
<dbReference type="GO" id="GO:0030378">
    <property type="term" value="F:serine racemase activity"/>
    <property type="evidence" value="ECO:0000314"/>
    <property type="project" value="dictyBase"/>
</dbReference>
<dbReference type="GO" id="GO:0018114">
    <property type="term" value="F:threonine racemase activity"/>
    <property type="evidence" value="ECO:0000318"/>
    <property type="project" value="GO_Central"/>
</dbReference>
<dbReference type="GO" id="GO:0070179">
    <property type="term" value="P:D-serine biosynthetic process"/>
    <property type="evidence" value="ECO:0000314"/>
    <property type="project" value="dictyBase"/>
</dbReference>
<dbReference type="GO" id="GO:0036088">
    <property type="term" value="P:D-serine catabolic process"/>
    <property type="evidence" value="ECO:0000314"/>
    <property type="project" value="dictyBase"/>
</dbReference>
<dbReference type="GO" id="GO:0006565">
    <property type="term" value="P:L-serine catabolic process"/>
    <property type="evidence" value="ECO:0000314"/>
    <property type="project" value="dictyBase"/>
</dbReference>
<dbReference type="GO" id="GO:0006563">
    <property type="term" value="P:L-serine metabolic process"/>
    <property type="evidence" value="ECO:0000314"/>
    <property type="project" value="dictyBase"/>
</dbReference>
<dbReference type="GO" id="GO:0042866">
    <property type="term" value="P:pyruvate biosynthetic process"/>
    <property type="evidence" value="ECO:0000314"/>
    <property type="project" value="dictyBase"/>
</dbReference>
<dbReference type="CDD" id="cd01562">
    <property type="entry name" value="Thr-dehyd"/>
    <property type="match status" value="1"/>
</dbReference>
<dbReference type="FunFam" id="3.40.50.1100:FF:000007">
    <property type="entry name" value="L-threonine dehydratase catabolic TdcB"/>
    <property type="match status" value="1"/>
</dbReference>
<dbReference type="FunFam" id="3.40.50.1100:FF:000005">
    <property type="entry name" value="Threonine dehydratase catabolic"/>
    <property type="match status" value="1"/>
</dbReference>
<dbReference type="Gene3D" id="3.40.50.1100">
    <property type="match status" value="2"/>
</dbReference>
<dbReference type="InterPro" id="IPR001926">
    <property type="entry name" value="TrpB-like_PALP"/>
</dbReference>
<dbReference type="InterPro" id="IPR036052">
    <property type="entry name" value="TrpB-like_PALP_sf"/>
</dbReference>
<dbReference type="PANTHER" id="PTHR43050">
    <property type="entry name" value="SERINE / THREONINE RACEMASE FAMILY MEMBER"/>
    <property type="match status" value="1"/>
</dbReference>
<dbReference type="PANTHER" id="PTHR43050:SF1">
    <property type="entry name" value="SERINE RACEMASE"/>
    <property type="match status" value="1"/>
</dbReference>
<dbReference type="Pfam" id="PF00291">
    <property type="entry name" value="PALP"/>
    <property type="match status" value="1"/>
</dbReference>
<dbReference type="SUPFAM" id="SSF53686">
    <property type="entry name" value="Tryptophan synthase beta subunit-like PLP-dependent enzymes"/>
    <property type="match status" value="1"/>
</dbReference>
<accession>Q54HH2</accession>